<comment type="function">
    <text evidence="1">Transfers dimethylallyl groups to AMP as part of the biosynthesis of cytokinin phytohormones.</text>
</comment>
<comment type="catalytic activity">
    <reaction>
        <text>dimethylallyl diphosphate + AMP = N(6)-(dimethylallyl)adenosine 5'-phosphate + diphosphate</text>
        <dbReference type="Rhea" id="RHEA:15285"/>
        <dbReference type="ChEBI" id="CHEBI:33019"/>
        <dbReference type="ChEBI" id="CHEBI:57526"/>
        <dbReference type="ChEBI" id="CHEBI:57623"/>
        <dbReference type="ChEBI" id="CHEBI:456215"/>
        <dbReference type="EC" id="2.5.1.27"/>
    </reaction>
</comment>
<protein>
    <recommendedName>
        <fullName>Adenylate dimethylallyltransferase</fullName>
        <ecNumber>2.5.1.27</ecNumber>
    </recommendedName>
    <alternativeName>
        <fullName>Dimethylallyl transferase</fullName>
    </alternativeName>
    <alternativeName>
        <fullName>Isopentenyl transferase</fullName>
    </alternativeName>
    <alternativeName>
        <fullName>Trans-zeatin producing protein</fullName>
    </alternativeName>
</protein>
<reference key="1">
    <citation type="journal article" date="1985" name="Nucleic Acids Res.">
        <title>Cloning and nucleotide sequence of the tzs gene from Agrobacterium tumefaciens strain T37.</title>
        <authorList>
            <person name="Akiyoshi D.E."/>
            <person name="Regier D.A."/>
            <person name="Jen G.C."/>
            <person name="Gordon M.P."/>
        </authorList>
    </citation>
    <scope>NUCLEOTIDE SEQUENCE [GENOMIC DNA]</scope>
</reference>
<dbReference type="EC" id="2.5.1.27"/>
<dbReference type="EMBL" id="X02423">
    <property type="protein sequence ID" value="CAA26275.1"/>
    <property type="molecule type" value="Genomic_DNA"/>
</dbReference>
<dbReference type="PIR" id="A23000">
    <property type="entry name" value="JJAG3Z"/>
</dbReference>
<dbReference type="RefSeq" id="NP_053379.1">
    <property type="nucleotide sequence ID" value="NC_002147.1"/>
</dbReference>
<dbReference type="SMR" id="P06524"/>
<dbReference type="GO" id="GO:0009824">
    <property type="term" value="F:AMP dimethylallyltransferase activity"/>
    <property type="evidence" value="ECO:0007669"/>
    <property type="project" value="UniProtKB-EC"/>
</dbReference>
<dbReference type="GO" id="GO:0009691">
    <property type="term" value="P:cytokinin biosynthetic process"/>
    <property type="evidence" value="ECO:0007669"/>
    <property type="project" value="UniProtKB-KW"/>
</dbReference>
<dbReference type="Gene3D" id="1.10.287.890">
    <property type="entry name" value="Crystal structure of tRNA isopentenylpyrophosphate transferase (bh2366) domain"/>
    <property type="match status" value="1"/>
</dbReference>
<dbReference type="Gene3D" id="3.40.50.300">
    <property type="entry name" value="P-loop containing nucleotide triphosphate hydrolases"/>
    <property type="match status" value="1"/>
</dbReference>
<dbReference type="InterPro" id="IPR027417">
    <property type="entry name" value="P-loop_NTPase"/>
</dbReference>
<dbReference type="InterPro" id="IPR002648">
    <property type="entry name" value="Tzs"/>
</dbReference>
<dbReference type="Pfam" id="PF01745">
    <property type="entry name" value="IPT"/>
    <property type="match status" value="1"/>
</dbReference>
<dbReference type="PIRSF" id="PIRSF000507">
    <property type="entry name" value="IPT"/>
    <property type="match status" value="1"/>
</dbReference>
<dbReference type="SUPFAM" id="SSF52540">
    <property type="entry name" value="P-loop containing nucleoside triphosphate hydrolases"/>
    <property type="match status" value="1"/>
</dbReference>
<geneLocation type="plasmid">
    <name>pTiT37</name>
</geneLocation>
<evidence type="ECO:0000250" key="1"/>
<gene>
    <name type="primary">tzs</name>
</gene>
<accession>P06524</accession>
<sequence>MILHLIYGPTCSGKTDMAIQIAQETGWPVVALDRVQCCPQIATGSGRPLESELQSTRRIYLDSRPLTEGILDAESAHRRLIFEVDWRKSEDGLILEGGSISLLNCMAKSPFWRSGFQWHVKRLRLGDSDAFLTRAKQRVAEMFAIREDRPSLLEELAELWNYPAARPILEDIDGYRCAIRFARKHDLAISQLPNIDAGRHVELIEAIANEYLEHALSQERDFPQWPEDGAGQPVCPVTLTRIR</sequence>
<proteinExistence type="inferred from homology"/>
<organism>
    <name type="scientific">Agrobacterium tumefaciens (strain T37)</name>
    <dbReference type="NCBI Taxonomy" id="176300"/>
    <lineage>
        <taxon>Bacteria</taxon>
        <taxon>Pseudomonadati</taxon>
        <taxon>Pseudomonadota</taxon>
        <taxon>Alphaproteobacteria</taxon>
        <taxon>Hyphomicrobiales</taxon>
        <taxon>Rhizobiaceae</taxon>
        <taxon>Rhizobium/Agrobacterium group</taxon>
        <taxon>Agrobacterium</taxon>
        <taxon>Agrobacterium tumefaciens complex</taxon>
    </lineage>
</organism>
<feature type="chain" id="PRO_0000216442" description="Adenylate dimethylallyltransferase">
    <location>
        <begin position="1"/>
        <end position="243"/>
    </location>
</feature>
<name>IPTZ_AGRT7</name>
<keyword id="KW-0192">Crown gall tumor</keyword>
<keyword id="KW-0203">Cytokinin biosynthesis</keyword>
<keyword id="KW-0614">Plasmid</keyword>
<keyword id="KW-0808">Transferase</keyword>